<dbReference type="EMBL" id="CP001205">
    <property type="protein sequence ID" value="ACK74691.1"/>
    <property type="molecule type" value="Genomic_DNA"/>
</dbReference>
<dbReference type="RefSeq" id="WP_002657380.1">
    <property type="nucleotide sequence ID" value="NC_011728.1"/>
</dbReference>
<dbReference type="SMR" id="B7J2L5"/>
<dbReference type="GeneID" id="56567470"/>
<dbReference type="KEGG" id="bbz:BbuZS7_0680"/>
<dbReference type="HOGENOM" id="CLU_038009_1_0_12"/>
<dbReference type="Proteomes" id="UP000006901">
    <property type="component" value="Chromosome"/>
</dbReference>
<dbReference type="GO" id="GO:0005829">
    <property type="term" value="C:cytosol"/>
    <property type="evidence" value="ECO:0007669"/>
    <property type="project" value="TreeGrafter"/>
</dbReference>
<dbReference type="GO" id="GO:0005886">
    <property type="term" value="C:plasma membrane"/>
    <property type="evidence" value="ECO:0007669"/>
    <property type="project" value="UniProtKB-SubCell"/>
</dbReference>
<dbReference type="GO" id="GO:0005525">
    <property type="term" value="F:GTP binding"/>
    <property type="evidence" value="ECO:0007669"/>
    <property type="project" value="UniProtKB-UniRule"/>
</dbReference>
<dbReference type="GO" id="GO:0003924">
    <property type="term" value="F:GTPase activity"/>
    <property type="evidence" value="ECO:0007669"/>
    <property type="project" value="UniProtKB-UniRule"/>
</dbReference>
<dbReference type="GO" id="GO:0043024">
    <property type="term" value="F:ribosomal small subunit binding"/>
    <property type="evidence" value="ECO:0007669"/>
    <property type="project" value="TreeGrafter"/>
</dbReference>
<dbReference type="GO" id="GO:0070181">
    <property type="term" value="F:small ribosomal subunit rRNA binding"/>
    <property type="evidence" value="ECO:0007669"/>
    <property type="project" value="UniProtKB-UniRule"/>
</dbReference>
<dbReference type="GO" id="GO:0000028">
    <property type="term" value="P:ribosomal small subunit assembly"/>
    <property type="evidence" value="ECO:0007669"/>
    <property type="project" value="TreeGrafter"/>
</dbReference>
<dbReference type="CDD" id="cd04163">
    <property type="entry name" value="Era"/>
    <property type="match status" value="1"/>
</dbReference>
<dbReference type="CDD" id="cd22534">
    <property type="entry name" value="KH-II_Era"/>
    <property type="match status" value="1"/>
</dbReference>
<dbReference type="Gene3D" id="3.30.300.20">
    <property type="match status" value="1"/>
</dbReference>
<dbReference type="Gene3D" id="3.40.50.300">
    <property type="entry name" value="P-loop containing nucleotide triphosphate hydrolases"/>
    <property type="match status" value="1"/>
</dbReference>
<dbReference type="HAMAP" id="MF_00367">
    <property type="entry name" value="GTPase_Era"/>
    <property type="match status" value="1"/>
</dbReference>
<dbReference type="InterPro" id="IPR030388">
    <property type="entry name" value="G_ERA_dom"/>
</dbReference>
<dbReference type="InterPro" id="IPR006073">
    <property type="entry name" value="GTP-bd"/>
</dbReference>
<dbReference type="InterPro" id="IPR005662">
    <property type="entry name" value="GTPase_Era-like"/>
</dbReference>
<dbReference type="InterPro" id="IPR015946">
    <property type="entry name" value="KH_dom-like_a/b"/>
</dbReference>
<dbReference type="InterPro" id="IPR004044">
    <property type="entry name" value="KH_dom_type_2"/>
</dbReference>
<dbReference type="InterPro" id="IPR009019">
    <property type="entry name" value="KH_sf_prok-type"/>
</dbReference>
<dbReference type="InterPro" id="IPR027417">
    <property type="entry name" value="P-loop_NTPase"/>
</dbReference>
<dbReference type="InterPro" id="IPR005225">
    <property type="entry name" value="Small_GTP-bd"/>
</dbReference>
<dbReference type="NCBIfam" id="TIGR00436">
    <property type="entry name" value="era"/>
    <property type="match status" value="1"/>
</dbReference>
<dbReference type="NCBIfam" id="NF000908">
    <property type="entry name" value="PRK00089.1"/>
    <property type="match status" value="1"/>
</dbReference>
<dbReference type="NCBIfam" id="TIGR00231">
    <property type="entry name" value="small_GTP"/>
    <property type="match status" value="1"/>
</dbReference>
<dbReference type="PANTHER" id="PTHR42698">
    <property type="entry name" value="GTPASE ERA"/>
    <property type="match status" value="1"/>
</dbReference>
<dbReference type="PANTHER" id="PTHR42698:SF1">
    <property type="entry name" value="GTPASE ERA, MITOCHONDRIAL"/>
    <property type="match status" value="1"/>
</dbReference>
<dbReference type="Pfam" id="PF07650">
    <property type="entry name" value="KH_2"/>
    <property type="match status" value="1"/>
</dbReference>
<dbReference type="Pfam" id="PF01926">
    <property type="entry name" value="MMR_HSR1"/>
    <property type="match status" value="1"/>
</dbReference>
<dbReference type="SUPFAM" id="SSF52540">
    <property type="entry name" value="P-loop containing nucleoside triphosphate hydrolases"/>
    <property type="match status" value="1"/>
</dbReference>
<dbReference type="SUPFAM" id="SSF54814">
    <property type="entry name" value="Prokaryotic type KH domain (KH-domain type II)"/>
    <property type="match status" value="1"/>
</dbReference>
<dbReference type="PROSITE" id="PS51713">
    <property type="entry name" value="G_ERA"/>
    <property type="match status" value="1"/>
</dbReference>
<dbReference type="PROSITE" id="PS50823">
    <property type="entry name" value="KH_TYPE_2"/>
    <property type="match status" value="1"/>
</dbReference>
<comment type="function">
    <text evidence="1">An essential GTPase that binds both GDP and GTP, with rapid nucleotide exchange. Plays a role in 16S rRNA processing and 30S ribosomal subunit biogenesis and possibly also in cell cycle regulation and energy metabolism.</text>
</comment>
<comment type="subunit">
    <text evidence="1">Monomer.</text>
</comment>
<comment type="subcellular location">
    <subcellularLocation>
        <location>Cytoplasm</location>
    </subcellularLocation>
    <subcellularLocation>
        <location evidence="1">Cell inner membrane</location>
        <topology evidence="1">Peripheral membrane protein</topology>
    </subcellularLocation>
</comment>
<comment type="similarity">
    <text evidence="1 2">Belongs to the TRAFAC class TrmE-Era-EngA-EngB-Septin-like GTPase superfamily. Era GTPase family.</text>
</comment>
<keyword id="KW-0997">Cell inner membrane</keyword>
<keyword id="KW-1003">Cell membrane</keyword>
<keyword id="KW-0963">Cytoplasm</keyword>
<keyword id="KW-0342">GTP-binding</keyword>
<keyword id="KW-0472">Membrane</keyword>
<keyword id="KW-0547">Nucleotide-binding</keyword>
<keyword id="KW-0690">Ribosome biogenesis</keyword>
<keyword id="KW-0694">RNA-binding</keyword>
<keyword id="KW-0699">rRNA-binding</keyword>
<reference key="1">
    <citation type="journal article" date="2011" name="J. Bacteriol.">
        <title>Whole-genome sequences of thirteen isolates of Borrelia burgdorferi.</title>
        <authorList>
            <person name="Schutzer S.E."/>
            <person name="Fraser-Liggett C.M."/>
            <person name="Casjens S.R."/>
            <person name="Qiu W.G."/>
            <person name="Dunn J.J."/>
            <person name="Mongodin E.F."/>
            <person name="Luft B.J."/>
        </authorList>
    </citation>
    <scope>NUCLEOTIDE SEQUENCE [LARGE SCALE GENOMIC DNA]</scope>
    <source>
        <strain>ZS7</strain>
    </source>
</reference>
<accession>B7J2L5</accession>
<feature type="chain" id="PRO_1000121301" description="GTPase Era">
    <location>
        <begin position="1"/>
        <end position="290"/>
    </location>
</feature>
<feature type="domain" description="Era-type G" evidence="2">
    <location>
        <begin position="2"/>
        <end position="169"/>
    </location>
</feature>
<feature type="domain" description="KH type-2" evidence="1">
    <location>
        <begin position="200"/>
        <end position="276"/>
    </location>
</feature>
<feature type="region of interest" description="G1" evidence="2">
    <location>
        <begin position="10"/>
        <end position="17"/>
    </location>
</feature>
<feature type="region of interest" description="G2" evidence="2">
    <location>
        <begin position="36"/>
        <end position="40"/>
    </location>
</feature>
<feature type="region of interest" description="G3" evidence="2">
    <location>
        <begin position="57"/>
        <end position="60"/>
    </location>
</feature>
<feature type="region of interest" description="G4" evidence="2">
    <location>
        <begin position="119"/>
        <end position="122"/>
    </location>
</feature>
<feature type="region of interest" description="G5" evidence="2">
    <location>
        <begin position="148"/>
        <end position="150"/>
    </location>
</feature>
<feature type="binding site" evidence="1">
    <location>
        <begin position="10"/>
        <end position="17"/>
    </location>
    <ligand>
        <name>GTP</name>
        <dbReference type="ChEBI" id="CHEBI:37565"/>
    </ligand>
</feature>
<feature type="binding site" evidence="1">
    <location>
        <begin position="57"/>
        <end position="61"/>
    </location>
    <ligand>
        <name>GTP</name>
        <dbReference type="ChEBI" id="CHEBI:37565"/>
    </ligand>
</feature>
<feature type="binding site" evidence="1">
    <location>
        <begin position="119"/>
        <end position="122"/>
    </location>
    <ligand>
        <name>GTP</name>
        <dbReference type="ChEBI" id="CHEBI:37565"/>
    </ligand>
</feature>
<gene>
    <name evidence="1" type="primary">era</name>
    <name type="ordered locus">BbuZS7_0680</name>
</gene>
<name>ERA_BORBZ</name>
<organism>
    <name type="scientific">Borreliella burgdorferi (strain ZS7)</name>
    <name type="common">Borrelia burgdorferi</name>
    <dbReference type="NCBI Taxonomy" id="445985"/>
    <lineage>
        <taxon>Bacteria</taxon>
        <taxon>Pseudomonadati</taxon>
        <taxon>Spirochaetota</taxon>
        <taxon>Spirochaetia</taxon>
        <taxon>Spirochaetales</taxon>
        <taxon>Borreliaceae</taxon>
        <taxon>Borreliella</taxon>
    </lineage>
</organism>
<evidence type="ECO:0000255" key="1">
    <source>
        <dbReference type="HAMAP-Rule" id="MF_00367"/>
    </source>
</evidence>
<evidence type="ECO:0000255" key="2">
    <source>
        <dbReference type="PROSITE-ProRule" id="PRU01050"/>
    </source>
</evidence>
<proteinExistence type="inferred from homology"/>
<protein>
    <recommendedName>
        <fullName evidence="1">GTPase Era</fullName>
    </recommendedName>
</protein>
<sequence length="290" mass="33355">MKSGFAAILGRPSTGKSTLLNSICGHKISIISPIPQTTRNNIKGIFTDDRGQIIFIDTPGFHLSKKKFNIAMMKNIHSSIGEVELILYIIDIQDKPGEEENKMLEIIKNSKIKFLVILNKIDLKNTKIKEITQFLKEKGIEDSNIIKISAEKKINTEELKNKIYENFSEGPLYYPQEYYTDQEINFRISEIIREKAIENLKEELPYSLYVDIDTLENKKGSLFIRANIFVANESQKGIIVGKNGKEIKSIGERARKTIAKIFETKCNLFLQVKLKKNWNKEDKLIKRLIN</sequence>